<gene>
    <name type="primary">NOP58</name>
    <name type="ordered locus">CNBF4620</name>
</gene>
<protein>
    <recommendedName>
        <fullName>Nucleolar protein 58</fullName>
    </recommendedName>
</protein>
<comment type="function">
    <text evidence="1">Required for pre-18S rRNA processing. May bind microtubules (By similarity).</text>
</comment>
<comment type="subcellular location">
    <subcellularLocation>
        <location evidence="1">Nucleus</location>
        <location evidence="1">Nucleolus</location>
    </subcellularLocation>
</comment>
<comment type="similarity">
    <text evidence="4">Belongs to the NOP5/NOP56 family.</text>
</comment>
<organism>
    <name type="scientific">Cryptococcus neoformans var. neoformans serotype D (strain B-3501A)</name>
    <name type="common">Filobasidiella neoformans</name>
    <dbReference type="NCBI Taxonomy" id="283643"/>
    <lineage>
        <taxon>Eukaryota</taxon>
        <taxon>Fungi</taxon>
        <taxon>Dikarya</taxon>
        <taxon>Basidiomycota</taxon>
        <taxon>Agaricomycotina</taxon>
        <taxon>Tremellomycetes</taxon>
        <taxon>Tremellales</taxon>
        <taxon>Cryptococcaceae</taxon>
        <taxon>Cryptococcus</taxon>
        <taxon>Cryptococcus neoformans species complex</taxon>
    </lineage>
</organism>
<reference key="1">
    <citation type="journal article" date="2005" name="Science">
        <title>The genome of the basidiomycetous yeast and human pathogen Cryptococcus neoformans.</title>
        <authorList>
            <person name="Loftus B.J."/>
            <person name="Fung E."/>
            <person name="Roncaglia P."/>
            <person name="Rowley D."/>
            <person name="Amedeo P."/>
            <person name="Bruno D."/>
            <person name="Vamathevan J."/>
            <person name="Miranda M."/>
            <person name="Anderson I.J."/>
            <person name="Fraser J.A."/>
            <person name="Allen J.E."/>
            <person name="Bosdet I.E."/>
            <person name="Brent M.R."/>
            <person name="Chiu R."/>
            <person name="Doering T.L."/>
            <person name="Donlin M.J."/>
            <person name="D'Souza C.A."/>
            <person name="Fox D.S."/>
            <person name="Grinberg V."/>
            <person name="Fu J."/>
            <person name="Fukushima M."/>
            <person name="Haas B.J."/>
            <person name="Huang J.C."/>
            <person name="Janbon G."/>
            <person name="Jones S.J.M."/>
            <person name="Koo H.L."/>
            <person name="Krzywinski M.I."/>
            <person name="Kwon-Chung K.J."/>
            <person name="Lengeler K.B."/>
            <person name="Maiti R."/>
            <person name="Marra M.A."/>
            <person name="Marra R.E."/>
            <person name="Mathewson C.A."/>
            <person name="Mitchell T.G."/>
            <person name="Pertea M."/>
            <person name="Riggs F.R."/>
            <person name="Salzberg S.L."/>
            <person name="Schein J.E."/>
            <person name="Shvartsbeyn A."/>
            <person name="Shin H."/>
            <person name="Shumway M."/>
            <person name="Specht C.A."/>
            <person name="Suh B.B."/>
            <person name="Tenney A."/>
            <person name="Utterback T.R."/>
            <person name="Wickes B.L."/>
            <person name="Wortman J.R."/>
            <person name="Wye N.H."/>
            <person name="Kronstad J.W."/>
            <person name="Lodge J.K."/>
            <person name="Heitman J."/>
            <person name="Davis R.W."/>
            <person name="Fraser C.M."/>
            <person name="Hyman R.W."/>
        </authorList>
    </citation>
    <scope>NUCLEOTIDE SEQUENCE [LARGE SCALE GENOMIC DNA]</scope>
    <source>
        <strain>B-3501A</strain>
    </source>
</reference>
<name>NOP58_CRYNB</name>
<keyword id="KW-0539">Nucleus</keyword>
<keyword id="KW-0687">Ribonucleoprotein</keyword>
<keyword id="KW-0690">Ribosome biogenesis</keyword>
<keyword id="KW-0698">rRNA processing</keyword>
<proteinExistence type="inferred from homology"/>
<evidence type="ECO:0000250" key="1"/>
<evidence type="ECO:0000255" key="2">
    <source>
        <dbReference type="PROSITE-ProRule" id="PRU00690"/>
    </source>
</evidence>
<evidence type="ECO:0000256" key="3">
    <source>
        <dbReference type="SAM" id="MobiDB-lite"/>
    </source>
</evidence>
<evidence type="ECO:0000305" key="4"/>
<dbReference type="EMBL" id="AAEY01000033">
    <property type="protein sequence ID" value="EAL19927.1"/>
    <property type="molecule type" value="Genomic_DNA"/>
</dbReference>
<dbReference type="RefSeq" id="XP_774574.1">
    <property type="nucleotide sequence ID" value="XM_769481.1"/>
</dbReference>
<dbReference type="SMR" id="P0CP27"/>
<dbReference type="GeneID" id="4937014"/>
<dbReference type="KEGG" id="cnb:CNBF4620"/>
<dbReference type="VEuPathDB" id="FungiDB:CNBF4620"/>
<dbReference type="HOGENOM" id="CLU_015495_5_2_1"/>
<dbReference type="OrthoDB" id="8196at5206"/>
<dbReference type="GO" id="GO:0031428">
    <property type="term" value="C:box C/D methylation guide snoRNP complex"/>
    <property type="evidence" value="ECO:0007669"/>
    <property type="project" value="InterPro"/>
</dbReference>
<dbReference type="GO" id="GO:0005730">
    <property type="term" value="C:nucleolus"/>
    <property type="evidence" value="ECO:0007669"/>
    <property type="project" value="UniProtKB-SubCell"/>
</dbReference>
<dbReference type="GO" id="GO:0032040">
    <property type="term" value="C:small-subunit processome"/>
    <property type="evidence" value="ECO:0007669"/>
    <property type="project" value="InterPro"/>
</dbReference>
<dbReference type="GO" id="GO:0030515">
    <property type="term" value="F:snoRNA binding"/>
    <property type="evidence" value="ECO:0007669"/>
    <property type="project" value="InterPro"/>
</dbReference>
<dbReference type="GO" id="GO:0006364">
    <property type="term" value="P:rRNA processing"/>
    <property type="evidence" value="ECO:0007669"/>
    <property type="project" value="UniProtKB-KW"/>
</dbReference>
<dbReference type="FunFam" id="1.10.246.90:FF:000003">
    <property type="entry name" value="Nucleolar protein 58"/>
    <property type="match status" value="1"/>
</dbReference>
<dbReference type="FunFam" id="1.10.287.4070:FF:000001">
    <property type="entry name" value="Probable Nucleolar protein 58"/>
    <property type="match status" value="1"/>
</dbReference>
<dbReference type="Gene3D" id="1.10.287.4070">
    <property type="match status" value="1"/>
</dbReference>
<dbReference type="Gene3D" id="1.10.246.90">
    <property type="entry name" value="Nop domain"/>
    <property type="match status" value="1"/>
</dbReference>
<dbReference type="InterPro" id="IPR045056">
    <property type="entry name" value="Nop56/Nop58"/>
</dbReference>
<dbReference type="InterPro" id="IPR012974">
    <property type="entry name" value="NOP58/56_N"/>
</dbReference>
<dbReference type="InterPro" id="IPR042239">
    <property type="entry name" value="Nop_C"/>
</dbReference>
<dbReference type="InterPro" id="IPR002687">
    <property type="entry name" value="Nop_dom"/>
</dbReference>
<dbReference type="InterPro" id="IPR036070">
    <property type="entry name" value="Nop_dom_sf"/>
</dbReference>
<dbReference type="InterPro" id="IPR012976">
    <property type="entry name" value="NOSIC"/>
</dbReference>
<dbReference type="PANTHER" id="PTHR10894">
    <property type="entry name" value="NUCLEOLAR PROTEIN 5 NUCLEOLAR PROTEIN NOP5 NOP58"/>
    <property type="match status" value="1"/>
</dbReference>
<dbReference type="PANTHER" id="PTHR10894:SF1">
    <property type="entry name" value="NUCLEOLAR PROTEIN 58"/>
    <property type="match status" value="1"/>
</dbReference>
<dbReference type="Pfam" id="PF01798">
    <property type="entry name" value="Nop"/>
    <property type="match status" value="1"/>
</dbReference>
<dbReference type="Pfam" id="PF08156">
    <property type="entry name" value="NOP5NT"/>
    <property type="match status" value="1"/>
</dbReference>
<dbReference type="SMART" id="SM00931">
    <property type="entry name" value="NOSIC"/>
    <property type="match status" value="1"/>
</dbReference>
<dbReference type="SUPFAM" id="SSF89124">
    <property type="entry name" value="Nop domain"/>
    <property type="match status" value="1"/>
</dbReference>
<dbReference type="PROSITE" id="PS51358">
    <property type="entry name" value="NOP"/>
    <property type="match status" value="1"/>
</dbReference>
<sequence>MLVLTETSVGFVVFKLSSDAKIDNKDLWKEFETPEGANKALKVQAIQRFTSTASAVEDLTAVQDGRLTDSLSRFLLDTVGGADDGEKKKKKKKIEEMLVVSDPKLAGTINKALSIPVLSDSSTQDLYRGIRQQLASLLGGVDQKDLNTMSLGLGHSLSRFKLKFSTDKVDTMVIQAIALLDDLDKEINIYAMRVKEWYGWHFPEMAKIIVDNIAFARVVKAMGFRTNAVTTDFSLLLPEDLEATLKSAAELSMGTEISDSDMTHIHSLCDQVISISEYRTQLSEYLRNRMQAIAPNLTALVGELVGARLISHAGSLMNLAKHPASTVQILGAEKALFRALKTKHDTPKYGLIYHASLIGQAPQKLKGKMARMVATKAALSIRVDALSDADSRSDVSAAEVGISNRVKLESRLRALEHQAGIQSVRKVVSANGQQGRQQPRFEMSGVTGSYNAATDNVPLNGDLLPTQPATEEVKEEKDEKKDKKKKRKSEVAEAGDVTMDGDADLSMVAGETKEERRARKEAKKAAKAAKKAAEESGDGDKKSKKRRADEDEDSEKKKKKKKKDE</sequence>
<feature type="chain" id="PRO_0000410170" description="Nucleolar protein 58">
    <location>
        <begin position="1"/>
        <end position="565"/>
    </location>
</feature>
<feature type="domain" description="Nop" evidence="2">
    <location>
        <begin position="293"/>
        <end position="417"/>
    </location>
</feature>
<feature type="region of interest" description="Disordered" evidence="3">
    <location>
        <begin position="430"/>
        <end position="565"/>
    </location>
</feature>
<feature type="compositionally biased region" description="Basic and acidic residues" evidence="3">
    <location>
        <begin position="471"/>
        <end position="481"/>
    </location>
</feature>
<feature type="compositionally biased region" description="Basic residues" evidence="3">
    <location>
        <begin position="519"/>
        <end position="530"/>
    </location>
</feature>
<feature type="compositionally biased region" description="Basic and acidic residues" evidence="3">
    <location>
        <begin position="531"/>
        <end position="541"/>
    </location>
</feature>
<accession>P0CP27</accession>
<accession>Q55Q74</accession>
<accession>Q5KFZ2</accession>